<sequence length="419" mass="50319">MKLYEWLLQRVRKALKKAYEASKEIKTMKQDFSLYKKSDFFDTTSWENSFSYIDFELNKYKWIIKYSLFKYRVSVVFLLFLSPFEISHSKDSLYFNILHNKKIHMQLSWIKKVIDDIETWQKKKRDFFYLQQTKNKQKQKKFHLGILSNIDSIAYETIGFIPRSITRTLYRFKTELTGKTALILFREFRFAKYQALASIQYGFFLLLLPWIVTLLFKKLSLEYLMNVWWNKSSIQLFNASQKKIALKRFQNMEDIFWLDLITKETLENKSQYSISLKIHDMIISLVEIYTQKSIYTIIELITDFIGIFTITVILCIAKKRLTVLNSWLQELFYSLSDTMKAFFILLITDLCIGFHSPHGWEVLIELVWEHFGFVPNQYITSFFVSTFPVVLDTMVKYWIFRHLNRISPSIVVTYHSMNE</sequence>
<gene>
    <name evidence="1" type="primary">cemA</name>
</gene>
<reference key="1">
    <citation type="journal article" date="2006" name="Mol. Biol. Evol.">
        <title>The chloroplast genome sequence of Chara vulgaris sheds new light into the closest green algal relatives of land plants.</title>
        <authorList>
            <person name="Turmel M."/>
            <person name="Otis C."/>
            <person name="Lemieux C."/>
        </authorList>
    </citation>
    <scope>NUCLEOTIDE SEQUENCE [LARGE SCALE GENOMIC DNA]</scope>
</reference>
<dbReference type="EMBL" id="DQ229107">
    <property type="protein sequence ID" value="ABA61908.1"/>
    <property type="molecule type" value="Genomic_DNA"/>
</dbReference>
<dbReference type="RefSeq" id="YP_635756.1">
    <property type="nucleotide sequence ID" value="NC_008097.1"/>
</dbReference>
<dbReference type="SMR" id="Q1ACJ1"/>
<dbReference type="GeneID" id="4100278"/>
<dbReference type="GO" id="GO:0009706">
    <property type="term" value="C:chloroplast inner membrane"/>
    <property type="evidence" value="ECO:0007669"/>
    <property type="project" value="UniProtKB-SubCell"/>
</dbReference>
<dbReference type="GO" id="GO:0015297">
    <property type="term" value="F:antiporter activity"/>
    <property type="evidence" value="ECO:0007669"/>
    <property type="project" value="UniProtKB-KW"/>
</dbReference>
<dbReference type="GO" id="GO:0015078">
    <property type="term" value="F:proton transmembrane transporter activity"/>
    <property type="evidence" value="ECO:0007669"/>
    <property type="project" value="UniProtKB-UniRule"/>
</dbReference>
<dbReference type="GO" id="GO:0006813">
    <property type="term" value="P:potassium ion transport"/>
    <property type="evidence" value="ECO:0007669"/>
    <property type="project" value="UniProtKB-UniRule"/>
</dbReference>
<dbReference type="HAMAP" id="MF_01308">
    <property type="entry name" value="CemA_PxcA"/>
    <property type="match status" value="1"/>
</dbReference>
<dbReference type="InterPro" id="IPR004282">
    <property type="entry name" value="CemA"/>
</dbReference>
<dbReference type="PANTHER" id="PTHR33650:SF2">
    <property type="entry name" value="CHLOROPLAST ENVELOPE MEMBRANE PROTEIN"/>
    <property type="match status" value="1"/>
</dbReference>
<dbReference type="PANTHER" id="PTHR33650">
    <property type="entry name" value="CHLOROPLAST ENVELOPE MEMBRANE PROTEIN-RELATED"/>
    <property type="match status" value="1"/>
</dbReference>
<dbReference type="Pfam" id="PF03040">
    <property type="entry name" value="CemA"/>
    <property type="match status" value="1"/>
</dbReference>
<geneLocation type="chloroplast"/>
<protein>
    <recommendedName>
        <fullName evidence="1">Potassium/proton antiporter CemA</fullName>
    </recommendedName>
    <alternativeName>
        <fullName evidence="1">Chloroplast envelope membrane protein A</fullName>
        <shortName evidence="1">CemA</shortName>
    </alternativeName>
</protein>
<proteinExistence type="inferred from homology"/>
<comment type="function">
    <text evidence="1">Contributes to K(+)/H(+) antiport activity by supporting proton efflux to control proton extrusion and homeostasis in chloroplasts in a light-dependent manner to modulate photosynthesis. Prevents excessive induction of non-photochemical quenching (NPQ) under continuous-light conditions. Indirectly promotes efficient inorganic carbon uptake into chloroplasts.</text>
</comment>
<comment type="catalytic activity">
    <reaction evidence="1">
        <text>K(+)(in) + H(+)(out) = K(+)(out) + H(+)(in)</text>
        <dbReference type="Rhea" id="RHEA:29467"/>
        <dbReference type="ChEBI" id="CHEBI:15378"/>
        <dbReference type="ChEBI" id="CHEBI:29103"/>
    </reaction>
</comment>
<comment type="subcellular location">
    <subcellularLocation>
        <location evidence="1">Plastid</location>
        <location evidence="1">Chloroplast inner membrane</location>
        <topology evidence="1">Multi-pass membrane protein</topology>
    </subcellularLocation>
</comment>
<comment type="similarity">
    <text evidence="1 2">Belongs to the CemA family.</text>
</comment>
<keyword id="KW-0050">Antiport</keyword>
<keyword id="KW-0150">Chloroplast</keyword>
<keyword id="KW-0375">Hydrogen ion transport</keyword>
<keyword id="KW-0406">Ion transport</keyword>
<keyword id="KW-0472">Membrane</keyword>
<keyword id="KW-0934">Plastid</keyword>
<keyword id="KW-1001">Plastid inner membrane</keyword>
<keyword id="KW-0630">Potassium</keyword>
<keyword id="KW-0633">Potassium transport</keyword>
<keyword id="KW-0812">Transmembrane</keyword>
<keyword id="KW-1133">Transmembrane helix</keyword>
<keyword id="KW-0813">Transport</keyword>
<feature type="chain" id="PRO_0000275231" description="Potassium/proton antiporter CemA">
    <location>
        <begin position="1"/>
        <end position="419"/>
    </location>
</feature>
<feature type="transmembrane region" description="Helical" evidence="1">
    <location>
        <begin position="196"/>
        <end position="216"/>
    </location>
</feature>
<feature type="transmembrane region" description="Helical" evidence="1">
    <location>
        <begin position="297"/>
        <end position="317"/>
    </location>
</feature>
<feature type="transmembrane region" description="Helical" evidence="1">
    <location>
        <begin position="344"/>
        <end position="364"/>
    </location>
</feature>
<feature type="transmembrane region" description="Helical" evidence="1">
    <location>
        <begin position="371"/>
        <end position="391"/>
    </location>
</feature>
<accession>Q1ACJ1</accession>
<evidence type="ECO:0000255" key="1">
    <source>
        <dbReference type="HAMAP-Rule" id="MF_01308"/>
    </source>
</evidence>
<evidence type="ECO:0000305" key="2"/>
<organism>
    <name type="scientific">Chara vulgaris</name>
    <name type="common">Common stonewort</name>
    <dbReference type="NCBI Taxonomy" id="55564"/>
    <lineage>
        <taxon>Eukaryota</taxon>
        <taxon>Viridiplantae</taxon>
        <taxon>Streptophyta</taxon>
        <taxon>Charophyceae</taxon>
        <taxon>Charales</taxon>
        <taxon>Characeae</taxon>
        <taxon>Chara</taxon>
    </lineage>
</organism>
<name>CEMA_CHAVU</name>